<reference key="1">
    <citation type="journal article" date="2000" name="Nature">
        <title>Sequence and analysis of chromosome 3 of the plant Arabidopsis thaliana.</title>
        <authorList>
            <person name="Salanoubat M."/>
            <person name="Lemcke K."/>
            <person name="Rieger M."/>
            <person name="Ansorge W."/>
            <person name="Unseld M."/>
            <person name="Fartmann B."/>
            <person name="Valle G."/>
            <person name="Bloecker H."/>
            <person name="Perez-Alonso M."/>
            <person name="Obermaier B."/>
            <person name="Delseny M."/>
            <person name="Boutry M."/>
            <person name="Grivell L.A."/>
            <person name="Mache R."/>
            <person name="Puigdomenech P."/>
            <person name="De Simone V."/>
            <person name="Choisne N."/>
            <person name="Artiguenave F."/>
            <person name="Robert C."/>
            <person name="Brottier P."/>
            <person name="Wincker P."/>
            <person name="Cattolico L."/>
            <person name="Weissenbach J."/>
            <person name="Saurin W."/>
            <person name="Quetier F."/>
            <person name="Schaefer M."/>
            <person name="Mueller-Auer S."/>
            <person name="Gabel C."/>
            <person name="Fuchs M."/>
            <person name="Benes V."/>
            <person name="Wurmbach E."/>
            <person name="Drzonek H."/>
            <person name="Erfle H."/>
            <person name="Jordan N."/>
            <person name="Bangert S."/>
            <person name="Wiedelmann R."/>
            <person name="Kranz H."/>
            <person name="Voss H."/>
            <person name="Holland R."/>
            <person name="Brandt P."/>
            <person name="Nyakatura G."/>
            <person name="Vezzi A."/>
            <person name="D'Angelo M."/>
            <person name="Pallavicini A."/>
            <person name="Toppo S."/>
            <person name="Simionati B."/>
            <person name="Conrad A."/>
            <person name="Hornischer K."/>
            <person name="Kauer G."/>
            <person name="Loehnert T.-H."/>
            <person name="Nordsiek G."/>
            <person name="Reichelt J."/>
            <person name="Scharfe M."/>
            <person name="Schoen O."/>
            <person name="Bargues M."/>
            <person name="Terol J."/>
            <person name="Climent J."/>
            <person name="Navarro P."/>
            <person name="Collado C."/>
            <person name="Perez-Perez A."/>
            <person name="Ottenwaelder B."/>
            <person name="Duchemin D."/>
            <person name="Cooke R."/>
            <person name="Laudie M."/>
            <person name="Berger-Llauro C."/>
            <person name="Purnelle B."/>
            <person name="Masuy D."/>
            <person name="de Haan M."/>
            <person name="Maarse A.C."/>
            <person name="Alcaraz J.-P."/>
            <person name="Cottet A."/>
            <person name="Casacuberta E."/>
            <person name="Monfort A."/>
            <person name="Argiriou A."/>
            <person name="Flores M."/>
            <person name="Liguori R."/>
            <person name="Vitale D."/>
            <person name="Mannhaupt G."/>
            <person name="Haase D."/>
            <person name="Schoof H."/>
            <person name="Rudd S."/>
            <person name="Zaccaria P."/>
            <person name="Mewes H.-W."/>
            <person name="Mayer K.F.X."/>
            <person name="Kaul S."/>
            <person name="Town C.D."/>
            <person name="Koo H.L."/>
            <person name="Tallon L.J."/>
            <person name="Jenkins J."/>
            <person name="Rooney T."/>
            <person name="Rizzo M."/>
            <person name="Walts A."/>
            <person name="Utterback T."/>
            <person name="Fujii C.Y."/>
            <person name="Shea T.P."/>
            <person name="Creasy T.H."/>
            <person name="Haas B."/>
            <person name="Maiti R."/>
            <person name="Wu D."/>
            <person name="Peterson J."/>
            <person name="Van Aken S."/>
            <person name="Pai G."/>
            <person name="Militscher J."/>
            <person name="Sellers P."/>
            <person name="Gill J.E."/>
            <person name="Feldblyum T.V."/>
            <person name="Preuss D."/>
            <person name="Lin X."/>
            <person name="Nierman W.C."/>
            <person name="Salzberg S.L."/>
            <person name="White O."/>
            <person name="Venter J.C."/>
            <person name="Fraser C.M."/>
            <person name="Kaneko T."/>
            <person name="Nakamura Y."/>
            <person name="Sato S."/>
            <person name="Kato T."/>
            <person name="Asamizu E."/>
            <person name="Sasamoto S."/>
            <person name="Kimura T."/>
            <person name="Idesawa K."/>
            <person name="Kawashima K."/>
            <person name="Kishida Y."/>
            <person name="Kiyokawa C."/>
            <person name="Kohara M."/>
            <person name="Matsumoto M."/>
            <person name="Matsuno A."/>
            <person name="Muraki A."/>
            <person name="Nakayama S."/>
            <person name="Nakazaki N."/>
            <person name="Shinpo S."/>
            <person name="Takeuchi C."/>
            <person name="Wada T."/>
            <person name="Watanabe A."/>
            <person name="Yamada M."/>
            <person name="Yasuda M."/>
            <person name="Tabata S."/>
        </authorList>
    </citation>
    <scope>NUCLEOTIDE SEQUENCE [LARGE SCALE GENOMIC DNA]</scope>
    <source>
        <strain>cv. Columbia</strain>
    </source>
</reference>
<reference key="2">
    <citation type="journal article" date="2017" name="Plant J.">
        <title>Araport11: a complete reannotation of the Arabidopsis thaliana reference genome.</title>
        <authorList>
            <person name="Cheng C.Y."/>
            <person name="Krishnakumar V."/>
            <person name="Chan A.P."/>
            <person name="Thibaud-Nissen F."/>
            <person name="Schobel S."/>
            <person name="Town C.D."/>
        </authorList>
    </citation>
    <scope>GENOME REANNOTATION</scope>
    <source>
        <strain>cv. Columbia</strain>
    </source>
</reference>
<gene>
    <name type="primary">CYP71A26</name>
    <name type="ordered locus">At3g48270</name>
    <name type="ORF">T29H11.210</name>
</gene>
<dbReference type="EC" id="1.14.-.-"/>
<dbReference type="EMBL" id="AL049659">
    <property type="protein sequence ID" value="CAB41171.1"/>
    <property type="molecule type" value="Genomic_DNA"/>
</dbReference>
<dbReference type="EMBL" id="CP002686">
    <property type="protein sequence ID" value="AEE78393.1"/>
    <property type="molecule type" value="Genomic_DNA"/>
</dbReference>
<dbReference type="PIR" id="T06715">
    <property type="entry name" value="T06715"/>
</dbReference>
<dbReference type="RefSeq" id="NP_680106.1">
    <property type="nucleotide sequence ID" value="NM_148853.1"/>
</dbReference>
<dbReference type="SMR" id="Q9STK7"/>
<dbReference type="FunCoup" id="Q9STK7">
    <property type="interactions" value="309"/>
</dbReference>
<dbReference type="STRING" id="3702.Q9STK7"/>
<dbReference type="iPTMnet" id="Q9STK7"/>
<dbReference type="PaxDb" id="3702-AT3G48270.1"/>
<dbReference type="ProteomicsDB" id="240302"/>
<dbReference type="EnsemblPlants" id="AT3G48270.1">
    <property type="protein sequence ID" value="AT3G48270.1"/>
    <property type="gene ID" value="AT3G48270"/>
</dbReference>
<dbReference type="GeneID" id="823985"/>
<dbReference type="Gramene" id="AT3G48270.1">
    <property type="protein sequence ID" value="AT3G48270.1"/>
    <property type="gene ID" value="AT3G48270"/>
</dbReference>
<dbReference type="KEGG" id="ath:AT3G48270"/>
<dbReference type="Araport" id="AT3G48270"/>
<dbReference type="TAIR" id="AT3G48270">
    <property type="gene designation" value="CYP71A26"/>
</dbReference>
<dbReference type="eggNOG" id="KOG0156">
    <property type="taxonomic scope" value="Eukaryota"/>
</dbReference>
<dbReference type="HOGENOM" id="CLU_001570_4_1_1"/>
<dbReference type="InParanoid" id="Q9STK7"/>
<dbReference type="OMA" id="TLMEWAM"/>
<dbReference type="PhylomeDB" id="Q9STK7"/>
<dbReference type="BioCyc" id="ARA:AT3G48270-MONOMER"/>
<dbReference type="PRO" id="PR:Q9STK7"/>
<dbReference type="Proteomes" id="UP000006548">
    <property type="component" value="Chromosome 3"/>
</dbReference>
<dbReference type="ExpressionAtlas" id="Q9STK7">
    <property type="expression patterns" value="baseline and differential"/>
</dbReference>
<dbReference type="GO" id="GO:0016020">
    <property type="term" value="C:membrane"/>
    <property type="evidence" value="ECO:0007669"/>
    <property type="project" value="UniProtKB-SubCell"/>
</dbReference>
<dbReference type="GO" id="GO:0020037">
    <property type="term" value="F:heme binding"/>
    <property type="evidence" value="ECO:0007669"/>
    <property type="project" value="InterPro"/>
</dbReference>
<dbReference type="GO" id="GO:0005506">
    <property type="term" value="F:iron ion binding"/>
    <property type="evidence" value="ECO:0007669"/>
    <property type="project" value="InterPro"/>
</dbReference>
<dbReference type="GO" id="GO:0004497">
    <property type="term" value="F:monooxygenase activity"/>
    <property type="evidence" value="ECO:0007669"/>
    <property type="project" value="UniProtKB-KW"/>
</dbReference>
<dbReference type="GO" id="GO:0016705">
    <property type="term" value="F:oxidoreductase activity, acting on paired donors, with incorporation or reduction of molecular oxygen"/>
    <property type="evidence" value="ECO:0007669"/>
    <property type="project" value="InterPro"/>
</dbReference>
<dbReference type="CDD" id="cd11072">
    <property type="entry name" value="CYP71-like"/>
    <property type="match status" value="1"/>
</dbReference>
<dbReference type="FunFam" id="1.10.630.10:FF:000011">
    <property type="entry name" value="Cytochrome P450 83B1"/>
    <property type="match status" value="1"/>
</dbReference>
<dbReference type="Gene3D" id="1.10.630.10">
    <property type="entry name" value="Cytochrome P450"/>
    <property type="match status" value="1"/>
</dbReference>
<dbReference type="InterPro" id="IPR001128">
    <property type="entry name" value="Cyt_P450"/>
</dbReference>
<dbReference type="InterPro" id="IPR017972">
    <property type="entry name" value="Cyt_P450_CS"/>
</dbReference>
<dbReference type="InterPro" id="IPR002401">
    <property type="entry name" value="Cyt_P450_E_grp-I"/>
</dbReference>
<dbReference type="InterPro" id="IPR036396">
    <property type="entry name" value="Cyt_P450_sf"/>
</dbReference>
<dbReference type="PANTHER" id="PTHR47955:SF15">
    <property type="entry name" value="CYTOCHROME P450 71A2-LIKE"/>
    <property type="match status" value="1"/>
</dbReference>
<dbReference type="PANTHER" id="PTHR47955">
    <property type="entry name" value="CYTOCHROME P450 FAMILY 71 PROTEIN"/>
    <property type="match status" value="1"/>
</dbReference>
<dbReference type="Pfam" id="PF00067">
    <property type="entry name" value="p450"/>
    <property type="match status" value="1"/>
</dbReference>
<dbReference type="PRINTS" id="PR00463">
    <property type="entry name" value="EP450I"/>
</dbReference>
<dbReference type="PRINTS" id="PR00385">
    <property type="entry name" value="P450"/>
</dbReference>
<dbReference type="SUPFAM" id="SSF48264">
    <property type="entry name" value="Cytochrome P450"/>
    <property type="match status" value="1"/>
</dbReference>
<dbReference type="PROSITE" id="PS00086">
    <property type="entry name" value="CYTOCHROME_P450"/>
    <property type="match status" value="1"/>
</dbReference>
<evidence type="ECO:0000250" key="1"/>
<evidence type="ECO:0000255" key="2"/>
<evidence type="ECO:0000305" key="3"/>
<name>C71AQ_ARATH</name>
<protein>
    <recommendedName>
        <fullName>Cytochrome P450 71A26</fullName>
        <ecNumber>1.14.-.-</ecNumber>
    </recommendedName>
</protein>
<proteinExistence type="inferred from homology"/>
<sequence>MMIMFFLLCSIIFVVTIIIFRKQKRGKKRNTLPSPPGLPLIGNLHQLGRHPHRSLCSLSHRYGPLMLLHFGRVPVLVVSSAELARDVLKTHDRVFASRPRSKIFEKLLYDKHDVASAPYGEYWRQMKSVCVLHLFSNKMVRSFREVREEEISLMMEKIRKSISLPVNLSKILVSLTNDVICKVALGRKYGGETDFKELMERLNKLLGTFSVGSYVPWLAWIDWIRGLDCQLEKTANDVDKFFERVVQDHVDGNRDMTDFVDVLLAIQRDKTVGFEINRVSIKAIVMNVFVGGTDTSSTLMEWAMTELLRHPKCLKRLQEEVRTICKDKSSVSEEEIQNMSYLKAVIKEALRLHPPLPLMVPHESTQDVRLGDHHIPAGTQVLINAWAIGREAATWGPDVEEFRPERHLDSSVDYRGQAFELIPFGSGRRICPAISFAVVLNEVVLANLVHRFDWRLSVESTEDQTEVAESTGIAIHRMFPLYAIASNTT</sequence>
<feature type="chain" id="PRO_0000052076" description="Cytochrome P450 71A26">
    <location>
        <begin position="1"/>
        <end position="489"/>
    </location>
</feature>
<feature type="transmembrane region" description="Helical" evidence="2">
    <location>
        <begin position="1"/>
        <end position="21"/>
    </location>
</feature>
<feature type="binding site" description="axial binding residue" evidence="1">
    <location>
        <position position="431"/>
    </location>
    <ligand>
        <name>heme</name>
        <dbReference type="ChEBI" id="CHEBI:30413"/>
    </ligand>
    <ligandPart>
        <name>Fe</name>
        <dbReference type="ChEBI" id="CHEBI:18248"/>
    </ligandPart>
</feature>
<accession>Q9STK7</accession>
<keyword id="KW-0349">Heme</keyword>
<keyword id="KW-0408">Iron</keyword>
<keyword id="KW-0472">Membrane</keyword>
<keyword id="KW-0479">Metal-binding</keyword>
<keyword id="KW-0503">Monooxygenase</keyword>
<keyword id="KW-0560">Oxidoreductase</keyword>
<keyword id="KW-1185">Reference proteome</keyword>
<keyword id="KW-0812">Transmembrane</keyword>
<keyword id="KW-1133">Transmembrane helix</keyword>
<organism>
    <name type="scientific">Arabidopsis thaliana</name>
    <name type="common">Mouse-ear cress</name>
    <dbReference type="NCBI Taxonomy" id="3702"/>
    <lineage>
        <taxon>Eukaryota</taxon>
        <taxon>Viridiplantae</taxon>
        <taxon>Streptophyta</taxon>
        <taxon>Embryophyta</taxon>
        <taxon>Tracheophyta</taxon>
        <taxon>Spermatophyta</taxon>
        <taxon>Magnoliopsida</taxon>
        <taxon>eudicotyledons</taxon>
        <taxon>Gunneridae</taxon>
        <taxon>Pentapetalae</taxon>
        <taxon>rosids</taxon>
        <taxon>malvids</taxon>
        <taxon>Brassicales</taxon>
        <taxon>Brassicaceae</taxon>
        <taxon>Camelineae</taxon>
        <taxon>Arabidopsis</taxon>
    </lineage>
</organism>
<comment type="cofactor">
    <cofactor evidence="1">
        <name>heme</name>
        <dbReference type="ChEBI" id="CHEBI:30413"/>
    </cofactor>
</comment>
<comment type="subcellular location">
    <subcellularLocation>
        <location evidence="3">Membrane</location>
        <topology evidence="3">Single-pass membrane protein</topology>
    </subcellularLocation>
</comment>
<comment type="similarity">
    <text evidence="3">Belongs to the cytochrome P450 family.</text>
</comment>